<comment type="function">
    <text evidence="1">May function as part of the axonemal radial spoke complex 3 (RS3). Radial spoke complexes are important for ciliary motility.</text>
</comment>
<comment type="subunit">
    <text evidence="1">Interacts with RSPH6A. Does not appear to be part of the axonemal radial spoke complexes 1 or 2.</text>
</comment>
<comment type="subcellular location">
    <subcellularLocation>
        <location evidence="1">Cytoplasm</location>
        <location evidence="1">Cytoskeleton</location>
        <location evidence="1">Cilium axoneme</location>
    </subcellularLocation>
    <subcellularLocation>
        <location evidence="4">Cell projection</location>
        <location evidence="4">Cilium</location>
    </subcellularLocation>
    <subcellularLocation>
        <location evidence="4">Cell projection</location>
        <location evidence="4">Cilium</location>
        <location evidence="4">Flagellum</location>
    </subcellularLocation>
</comment>
<proteinExistence type="evidence at transcript level"/>
<keyword id="KW-0966">Cell projection</keyword>
<keyword id="KW-0969">Cilium</keyword>
<keyword id="KW-0175">Coiled coil</keyword>
<keyword id="KW-0963">Cytoplasm</keyword>
<keyword id="KW-0206">Cytoskeleton</keyword>
<keyword id="KW-0282">Flagellum</keyword>
<keyword id="KW-1185">Reference proteome</keyword>
<keyword id="KW-0677">Repeat</keyword>
<name>R10B1_HUMAN</name>
<accession>P0C881</accession>
<accession>A6NMW7</accession>
<accession>Q86ST9</accession>
<accession>Q8NE68</accession>
<reference key="1">
    <citation type="journal article" date="2003" name="Nature">
        <title>The DNA sequence of human chromosome 7.</title>
        <authorList>
            <person name="Hillier L.W."/>
            <person name="Fulton R.S."/>
            <person name="Fulton L.A."/>
            <person name="Graves T.A."/>
            <person name="Pepin K.H."/>
            <person name="Wagner-McPherson C."/>
            <person name="Layman D."/>
            <person name="Maas J."/>
            <person name="Jaeger S."/>
            <person name="Walker R."/>
            <person name="Wylie K."/>
            <person name="Sekhon M."/>
            <person name="Becker M.C."/>
            <person name="O'Laughlin M.D."/>
            <person name="Schaller M.E."/>
            <person name="Fewell G.A."/>
            <person name="Delehaunty K.D."/>
            <person name="Miner T.L."/>
            <person name="Nash W.E."/>
            <person name="Cordes M."/>
            <person name="Du H."/>
            <person name="Sun H."/>
            <person name="Edwards J."/>
            <person name="Bradshaw-Cordum H."/>
            <person name="Ali J."/>
            <person name="Andrews S."/>
            <person name="Isak A."/>
            <person name="Vanbrunt A."/>
            <person name="Nguyen C."/>
            <person name="Du F."/>
            <person name="Lamar B."/>
            <person name="Courtney L."/>
            <person name="Kalicki J."/>
            <person name="Ozersky P."/>
            <person name="Bielicki L."/>
            <person name="Scott K."/>
            <person name="Holmes A."/>
            <person name="Harkins R."/>
            <person name="Harris A."/>
            <person name="Strong C.M."/>
            <person name="Hou S."/>
            <person name="Tomlinson C."/>
            <person name="Dauphin-Kohlberg S."/>
            <person name="Kozlowicz-Reilly A."/>
            <person name="Leonard S."/>
            <person name="Rohlfing T."/>
            <person name="Rock S.M."/>
            <person name="Tin-Wollam A.-M."/>
            <person name="Abbott A."/>
            <person name="Minx P."/>
            <person name="Maupin R."/>
            <person name="Strowmatt C."/>
            <person name="Latreille P."/>
            <person name="Miller N."/>
            <person name="Johnson D."/>
            <person name="Murray J."/>
            <person name="Woessner J.P."/>
            <person name="Wendl M.C."/>
            <person name="Yang S.-P."/>
            <person name="Schultz B.R."/>
            <person name="Wallis J.W."/>
            <person name="Spieth J."/>
            <person name="Bieri T.A."/>
            <person name="Nelson J.O."/>
            <person name="Berkowicz N."/>
            <person name="Wohldmann P.E."/>
            <person name="Cook L.L."/>
            <person name="Hickenbotham M.T."/>
            <person name="Eldred J."/>
            <person name="Williams D."/>
            <person name="Bedell J.A."/>
            <person name="Mardis E.R."/>
            <person name="Clifton S.W."/>
            <person name="Chissoe S.L."/>
            <person name="Marra M.A."/>
            <person name="Raymond C."/>
            <person name="Haugen E."/>
            <person name="Gillett W."/>
            <person name="Zhou Y."/>
            <person name="James R."/>
            <person name="Phelps K."/>
            <person name="Iadanoto S."/>
            <person name="Bubb K."/>
            <person name="Simms E."/>
            <person name="Levy R."/>
            <person name="Clendenning J."/>
            <person name="Kaul R."/>
            <person name="Kent W.J."/>
            <person name="Furey T.S."/>
            <person name="Baertsch R.A."/>
            <person name="Brent M.R."/>
            <person name="Keibler E."/>
            <person name="Flicek P."/>
            <person name="Bork P."/>
            <person name="Suyama M."/>
            <person name="Bailey J.A."/>
            <person name="Portnoy M.E."/>
            <person name="Torrents D."/>
            <person name="Chinwalla A.T."/>
            <person name="Gish W.R."/>
            <person name="Eddy S.R."/>
            <person name="McPherson J.D."/>
            <person name="Olson M.V."/>
            <person name="Eichler E.E."/>
            <person name="Green E.D."/>
            <person name="Waterston R.H."/>
            <person name="Wilson R.K."/>
        </authorList>
    </citation>
    <scope>NUCLEOTIDE SEQUENCE [LARGE SCALE GENOMIC DNA]</scope>
</reference>
<reference key="2">
    <citation type="submission" date="1997-04" db="EMBL/GenBank/DDBJ databases">
        <authorList>
            <person name="Kerlavage A.R."/>
        </authorList>
    </citation>
    <scope>NUCLEOTIDE SEQUENCE [LARGE SCALE MRNA] OF 711-784</scope>
    <source>
        <tissue>Testis</tissue>
    </source>
</reference>
<reference key="3">
    <citation type="journal article" date="2004" name="Genome Res.">
        <title>The status, quality, and expansion of the NIH full-length cDNA project: the Mammalian Gene Collection (MGC).</title>
        <authorList>
            <consortium name="The MGC Project Team"/>
        </authorList>
    </citation>
    <scope>NUCLEOTIDE SEQUENCE [LARGE SCALE MRNA] OF 757-870</scope>
    <source>
        <tissue>Cervix adenocarcinoma</tissue>
    </source>
</reference>
<reference key="4">
    <citation type="journal article" date="2019" name="J. Proteome Res.">
        <title>Cell Type-Specific Expression of Testis Elevated Genes Based on Transcriptomics and Antibody-Based Proteomics.</title>
        <authorList>
            <person name="Pineau C."/>
            <person name="Hikmet F."/>
            <person name="Zhang C."/>
            <person name="Oksvold P."/>
            <person name="Chen S."/>
            <person name="Fagerberg L."/>
            <person name="Uhlen M."/>
            <person name="Lindskog C."/>
        </authorList>
    </citation>
    <scope>SUBCELLULAR LOCATION</scope>
</reference>
<dbReference type="EMBL" id="AC005995">
    <property type="status" value="NOT_ANNOTATED_CDS"/>
    <property type="molecule type" value="Genomic_DNA"/>
</dbReference>
<dbReference type="EMBL" id="AA382672">
    <property type="status" value="NOT_ANNOTATED_CDS"/>
    <property type="molecule type" value="mRNA"/>
</dbReference>
<dbReference type="EMBL" id="AW474289">
    <property type="status" value="NOT_ANNOTATED_CDS"/>
    <property type="molecule type" value="mRNA"/>
</dbReference>
<dbReference type="CCDS" id="CCDS34598.1"/>
<dbReference type="RefSeq" id="NP_775836.4">
    <property type="nucleotide sequence ID" value="NM_173565.5"/>
</dbReference>
<dbReference type="RefSeq" id="XP_005249716.1">
    <property type="nucleotide sequence ID" value="XM_005249659.5"/>
</dbReference>
<dbReference type="SMR" id="P0C881"/>
<dbReference type="BioGRID" id="128823">
    <property type="interactions" value="3"/>
</dbReference>
<dbReference type="FunCoup" id="P0C881">
    <property type="interactions" value="15"/>
</dbReference>
<dbReference type="IntAct" id="P0C881">
    <property type="interactions" value="1"/>
</dbReference>
<dbReference type="STRING" id="9606.ENSP00000385443"/>
<dbReference type="GlyGen" id="P0C881">
    <property type="glycosylation" value="1 site, 1 O-linked glycan (1 site)"/>
</dbReference>
<dbReference type="iPTMnet" id="P0C881"/>
<dbReference type="PhosphoSitePlus" id="P0C881"/>
<dbReference type="BioMuta" id="RSPH10B"/>
<dbReference type="DMDM" id="205829389"/>
<dbReference type="jPOST" id="P0C881"/>
<dbReference type="MassIVE" id="P0C881"/>
<dbReference type="PaxDb" id="9606-ENSP00000385443"/>
<dbReference type="PeptideAtlas" id="P0C881"/>
<dbReference type="ProteomicsDB" id="52415"/>
<dbReference type="Antibodypedia" id="57710">
    <property type="antibodies" value="41 antibodies from 12 providers"/>
</dbReference>
<dbReference type="DNASU" id="222967"/>
<dbReference type="Ensembl" id="ENST00000337579.4">
    <property type="protein sequence ID" value="ENSP00000338556.3"/>
    <property type="gene ID" value="ENSG00000155026.17"/>
</dbReference>
<dbReference type="Ensembl" id="ENST00000404406.6">
    <property type="protein sequence ID" value="ENSP00000384097.1"/>
    <property type="gene ID" value="ENSG00000155026.17"/>
</dbReference>
<dbReference type="Ensembl" id="ENST00000405415.5">
    <property type="protein sequence ID" value="ENSP00000385443.1"/>
    <property type="gene ID" value="ENSG00000155026.17"/>
</dbReference>
<dbReference type="GeneID" id="222967"/>
<dbReference type="MANE-Select" id="ENST00000404406.6">
    <property type="protein sequence ID" value="ENSP00000384097.1"/>
    <property type="RefSeq nucleotide sequence ID" value="NM_173565.5"/>
    <property type="RefSeq protein sequence ID" value="NP_775836.4"/>
</dbReference>
<dbReference type="UCSC" id="uc003sph.1">
    <property type="organism name" value="human"/>
</dbReference>
<dbReference type="AGR" id="HGNC:27362"/>
<dbReference type="CTD" id="222967"/>
<dbReference type="GeneCards" id="RSPH10B"/>
<dbReference type="HGNC" id="HGNC:27362">
    <property type="gene designation" value="RSPH10B"/>
</dbReference>
<dbReference type="HPA" id="ENSG00000155026">
    <property type="expression patterns" value="Tissue enhanced (fallopian tube, testis)"/>
</dbReference>
<dbReference type="neXtProt" id="NX_P0C881"/>
<dbReference type="OpenTargets" id="ENSG00000155026"/>
<dbReference type="VEuPathDB" id="HostDB:ENSG00000155026"/>
<dbReference type="eggNOG" id="KOG0231">
    <property type="taxonomic scope" value="Eukaryota"/>
</dbReference>
<dbReference type="GeneTree" id="ENSGT00940000159899"/>
<dbReference type="HOGENOM" id="CLU_012108_1_0_1"/>
<dbReference type="InParanoid" id="P0C881"/>
<dbReference type="OMA" id="YEGDFVC"/>
<dbReference type="OrthoDB" id="294378at2759"/>
<dbReference type="PAN-GO" id="P0C881">
    <property type="GO annotations" value="0 GO annotations based on evolutionary models"/>
</dbReference>
<dbReference type="PhylomeDB" id="P0C881"/>
<dbReference type="TreeFam" id="TF328649"/>
<dbReference type="PathwayCommons" id="P0C881"/>
<dbReference type="SignaLink" id="P0C881"/>
<dbReference type="BioGRID-ORCS" id="222967">
    <property type="hits" value="22 hits in 997 CRISPR screens"/>
</dbReference>
<dbReference type="ChiTaRS" id="RSPH10B">
    <property type="organism name" value="human"/>
</dbReference>
<dbReference type="GenomeRNAi" id="222967"/>
<dbReference type="Pharos" id="P0C881">
    <property type="development level" value="Tdark"/>
</dbReference>
<dbReference type="PRO" id="PR:P0C881"/>
<dbReference type="Proteomes" id="UP000005640">
    <property type="component" value="Chromosome 7"/>
</dbReference>
<dbReference type="RNAct" id="P0C881">
    <property type="molecule type" value="protein"/>
</dbReference>
<dbReference type="Bgee" id="ENSG00000155026">
    <property type="expression patterns" value="Expressed in right uterine tube and 92 other cell types or tissues"/>
</dbReference>
<dbReference type="ExpressionAtlas" id="P0C881">
    <property type="expression patterns" value="baseline and differential"/>
</dbReference>
<dbReference type="GO" id="GO:0097729">
    <property type="term" value="C:9+2 motile cilium"/>
    <property type="evidence" value="ECO:0000250"/>
    <property type="project" value="UniProtKB"/>
</dbReference>
<dbReference type="GO" id="GO:0005929">
    <property type="term" value="C:cilium"/>
    <property type="evidence" value="ECO:0000314"/>
    <property type="project" value="UniProtKB"/>
</dbReference>
<dbReference type="GO" id="GO:0005737">
    <property type="term" value="C:cytoplasm"/>
    <property type="evidence" value="ECO:0007669"/>
    <property type="project" value="UniProtKB-KW"/>
</dbReference>
<dbReference type="GO" id="GO:0005856">
    <property type="term" value="C:cytoskeleton"/>
    <property type="evidence" value="ECO:0007669"/>
    <property type="project" value="UniProtKB-KW"/>
</dbReference>
<dbReference type="GO" id="GO:0036126">
    <property type="term" value="C:sperm flagellum"/>
    <property type="evidence" value="ECO:0000314"/>
    <property type="project" value="UniProtKB"/>
</dbReference>
<dbReference type="Gene3D" id="2.20.110.10">
    <property type="entry name" value="Histone H3 K4-specific methyltransferase SET7/9 N-terminal domain"/>
    <property type="match status" value="3"/>
</dbReference>
<dbReference type="InterPro" id="IPR003409">
    <property type="entry name" value="MORN"/>
</dbReference>
<dbReference type="PANTHER" id="PTHR46613">
    <property type="entry name" value="RADIAL SPOKE HEAD 10 HOMOLOG B-RELATED"/>
    <property type="match status" value="1"/>
</dbReference>
<dbReference type="PANTHER" id="PTHR46613:SF1">
    <property type="entry name" value="RADIAL SPOKE HEAD 10 HOMOLOG B-RELATED"/>
    <property type="match status" value="1"/>
</dbReference>
<dbReference type="Pfam" id="PF02493">
    <property type="entry name" value="MORN"/>
    <property type="match status" value="10"/>
</dbReference>
<dbReference type="SMART" id="SM00698">
    <property type="entry name" value="MORN"/>
    <property type="match status" value="9"/>
</dbReference>
<dbReference type="SUPFAM" id="SSF82185">
    <property type="entry name" value="Histone H3 K4-specific methyltransferase SET7/9 N-terminal domain"/>
    <property type="match status" value="3"/>
</dbReference>
<evidence type="ECO:0000250" key="1">
    <source>
        <dbReference type="UniProtKB" id="E9PYQ0"/>
    </source>
</evidence>
<evidence type="ECO:0000255" key="2"/>
<evidence type="ECO:0000256" key="3">
    <source>
        <dbReference type="SAM" id="MobiDB-lite"/>
    </source>
</evidence>
<evidence type="ECO:0000269" key="4">
    <source>
    </source>
</evidence>
<sequence length="870" mass="100635">MVKEKKKADKKGEKSARSPSSLSDNLDFSKQDGNTTRQEMSPAGVPLLGMQLNEVKPKKDRQNVQQNEDATQYEESILTKLIVESYEGEKVRGLYEGEGFAAFQGGCTYRGMFSEGLMHGQGTYIWADGLKYEGDFVKNVPMNHGVYTWPDGSMYEGEVVNGMRNGFGMFKCSTQPVSYIGHWCNGKRHGKGSIYYNQEGTCWYEGDWVQNIKKGWGIRCYKSGNIYEGQWEDNMRHGEGRMRWLTTNEEYTGRWERGIQNGFGTHTWFLKRIRSSQYPLRNEYIGEFVNGYRHGRGKFYYASGAMYDGEWVSNKKHGMGRLTFKNGRVYEGAFSNDHIAGFPDLEVEFISCLDLSSGVAPRLSRSAELIRKLDGSESHSVLGSSIELDLNLLLDMYPETVQPEEKKQVEYAVLRNITELRRIYSFYSSLGCGHSLDNTFLMTKLHFWRFLKDCKFHHHKLTLADMDRILSANNDIPVEEIHSPFTTILLRTFLNYLLHLAYHIYHEEFQKRSPSLFLCFTKLMTENIRPNAFQIKGNLFREQQRTLYSMSYMNKCWEIYLAYCRPSAAPPHEPTMKMRHFLWMLKDFKMINKELTAATFMEVIAEDNRFIYDGIDSNFEPELVFLEFFEALLSFAFICVTDQMTKSYTNVPADDVSGNKHETIYTILNQDAQNKSPSAVMSHESDAAHSDSARSSSSKLELSPDVNKIRKSEPKIKKSVSHERVSKMNFKLTGKGITFFSSESKKYERPKDDREEEFNTWVNNMYVFFVNTLFHAYKREEAIKEKIRADRLRSTAQAQQRKMEDDELEARLNIFILREEEAKRHDYEVDITVLKEPADVSSSHLILDPPKEDVTVSPSSKTITSKKKKK</sequence>
<protein>
    <recommendedName>
        <fullName>Radial spoke head 10 homolog B</fullName>
    </recommendedName>
</protein>
<organism>
    <name type="scientific">Homo sapiens</name>
    <name type="common">Human</name>
    <dbReference type="NCBI Taxonomy" id="9606"/>
    <lineage>
        <taxon>Eukaryota</taxon>
        <taxon>Metazoa</taxon>
        <taxon>Chordata</taxon>
        <taxon>Craniata</taxon>
        <taxon>Vertebrata</taxon>
        <taxon>Euteleostomi</taxon>
        <taxon>Mammalia</taxon>
        <taxon>Eutheria</taxon>
        <taxon>Euarchontoglires</taxon>
        <taxon>Primates</taxon>
        <taxon>Haplorrhini</taxon>
        <taxon>Catarrhini</taxon>
        <taxon>Hominidae</taxon>
        <taxon>Homo</taxon>
    </lineage>
</organism>
<feature type="chain" id="PRO_0000311943" description="Radial spoke head 10 homolog B">
    <location>
        <begin position="1"/>
        <end position="870"/>
    </location>
</feature>
<feature type="repeat" description="MORN 1">
    <location>
        <begin position="86"/>
        <end position="108"/>
    </location>
</feature>
<feature type="repeat" description="MORN 2">
    <location>
        <begin position="109"/>
        <end position="131"/>
    </location>
</feature>
<feature type="repeat" description="MORN 3">
    <location>
        <begin position="132"/>
        <end position="154"/>
    </location>
</feature>
<feature type="repeat" description="MORN 4">
    <location>
        <begin position="155"/>
        <end position="177"/>
    </location>
</feature>
<feature type="repeat" description="MORN 5">
    <location>
        <begin position="179"/>
        <end position="201"/>
    </location>
</feature>
<feature type="repeat" description="MORN 6">
    <location>
        <begin position="204"/>
        <end position="226"/>
    </location>
</feature>
<feature type="repeat" description="MORN 7">
    <location>
        <begin position="227"/>
        <end position="249"/>
    </location>
</feature>
<feature type="repeat" description="MORN 8">
    <location>
        <begin position="251"/>
        <end position="273"/>
    </location>
</feature>
<feature type="repeat" description="MORN 9">
    <location>
        <begin position="284"/>
        <end position="306"/>
    </location>
</feature>
<feature type="repeat" description="MORN 10">
    <location>
        <begin position="307"/>
        <end position="329"/>
    </location>
</feature>
<feature type="region of interest" description="Disordered" evidence="3">
    <location>
        <begin position="1"/>
        <end position="43"/>
    </location>
</feature>
<feature type="region of interest" description="Disordered" evidence="3">
    <location>
        <begin position="674"/>
        <end position="704"/>
    </location>
</feature>
<feature type="region of interest" description="Disordered" evidence="3">
    <location>
        <begin position="840"/>
        <end position="870"/>
    </location>
</feature>
<feature type="coiled-coil region" evidence="2">
    <location>
        <begin position="784"/>
        <end position="811"/>
    </location>
</feature>
<feature type="compositionally biased region" description="Basic and acidic residues" evidence="3">
    <location>
        <begin position="1"/>
        <end position="16"/>
    </location>
</feature>
<feature type="compositionally biased region" description="Polar residues" evidence="3">
    <location>
        <begin position="17"/>
        <end position="39"/>
    </location>
</feature>
<feature type="compositionally biased region" description="Basic and acidic residues" evidence="3">
    <location>
        <begin position="683"/>
        <end position="692"/>
    </location>
</feature>
<feature type="compositionally biased region" description="Low complexity" evidence="3">
    <location>
        <begin position="693"/>
        <end position="703"/>
    </location>
</feature>
<gene>
    <name type="primary">RSPH10B</name>
</gene>